<accession>P58276</accession>
<evidence type="ECO:0000255" key="1">
    <source>
        <dbReference type="HAMAP-Rule" id="MF_00444"/>
    </source>
</evidence>
<proteinExistence type="inferred from homology"/>
<protein>
    <recommendedName>
        <fullName evidence="1">ATP-dependent Clp protease proteolytic subunit</fullName>
        <ecNumber evidence="1">3.4.21.92</ecNumber>
    </recommendedName>
    <alternativeName>
        <fullName evidence="1">Endopeptidase Clp</fullName>
    </alternativeName>
</protein>
<feature type="chain" id="PRO_0000179538" description="ATP-dependent Clp protease proteolytic subunit">
    <location>
        <begin position="1"/>
        <end position="193"/>
    </location>
</feature>
<feature type="active site" description="Nucleophile" evidence="1">
    <location>
        <position position="98"/>
    </location>
</feature>
<feature type="active site" evidence="1">
    <location>
        <position position="123"/>
    </location>
</feature>
<keyword id="KW-0963">Cytoplasm</keyword>
<keyword id="KW-0378">Hydrolase</keyword>
<keyword id="KW-0645">Protease</keyword>
<keyword id="KW-1185">Reference proteome</keyword>
<keyword id="KW-0720">Serine protease</keyword>
<gene>
    <name evidence="1" type="primary">clpP</name>
    <name type="ordered locus">CA_C2640</name>
</gene>
<sequence length="193" mass="21423">MSLVPYVIEQTSRGERSYDIYSRLLKDRVIFLGEEVNDTTASLVVAQLLFLESEDPDKDIYLYINSPGGSITSGMAIYDTMQYVKPDVSTICIGMAASMGSFLLTAGAPGKRFALPNSEIMIHQPLGGFKGQATDIGIHAQRILEIKKKLNSIYSERTGKPIEVIEKDTDRDHFLSAEEAKEYGLIDEVITKH</sequence>
<name>CLPP_CLOAB</name>
<dbReference type="EC" id="3.4.21.92" evidence="1"/>
<dbReference type="EMBL" id="AE001437">
    <property type="protein sequence ID" value="AAK80587.1"/>
    <property type="molecule type" value="Genomic_DNA"/>
</dbReference>
<dbReference type="PIR" id="H97224">
    <property type="entry name" value="H97224"/>
</dbReference>
<dbReference type="RefSeq" id="NP_349247.1">
    <property type="nucleotide sequence ID" value="NC_003030.1"/>
</dbReference>
<dbReference type="RefSeq" id="WP_010965928.1">
    <property type="nucleotide sequence ID" value="NC_003030.1"/>
</dbReference>
<dbReference type="SMR" id="P58276"/>
<dbReference type="STRING" id="272562.CA_C2640"/>
<dbReference type="MEROPS" id="S14.001"/>
<dbReference type="GeneID" id="44999108"/>
<dbReference type="KEGG" id="cac:CA_C2640"/>
<dbReference type="PATRIC" id="fig|272562.8.peg.2829"/>
<dbReference type="eggNOG" id="COG0740">
    <property type="taxonomic scope" value="Bacteria"/>
</dbReference>
<dbReference type="HOGENOM" id="CLU_058707_3_2_9"/>
<dbReference type="OrthoDB" id="9802800at2"/>
<dbReference type="Proteomes" id="UP000000814">
    <property type="component" value="Chromosome"/>
</dbReference>
<dbReference type="GO" id="GO:0005737">
    <property type="term" value="C:cytoplasm"/>
    <property type="evidence" value="ECO:0007669"/>
    <property type="project" value="UniProtKB-SubCell"/>
</dbReference>
<dbReference type="GO" id="GO:0009368">
    <property type="term" value="C:endopeptidase Clp complex"/>
    <property type="evidence" value="ECO:0007669"/>
    <property type="project" value="TreeGrafter"/>
</dbReference>
<dbReference type="GO" id="GO:0004176">
    <property type="term" value="F:ATP-dependent peptidase activity"/>
    <property type="evidence" value="ECO:0007669"/>
    <property type="project" value="InterPro"/>
</dbReference>
<dbReference type="GO" id="GO:0051117">
    <property type="term" value="F:ATPase binding"/>
    <property type="evidence" value="ECO:0007669"/>
    <property type="project" value="TreeGrafter"/>
</dbReference>
<dbReference type="GO" id="GO:0004252">
    <property type="term" value="F:serine-type endopeptidase activity"/>
    <property type="evidence" value="ECO:0007669"/>
    <property type="project" value="UniProtKB-UniRule"/>
</dbReference>
<dbReference type="GO" id="GO:0006515">
    <property type="term" value="P:protein quality control for misfolded or incompletely synthesized proteins"/>
    <property type="evidence" value="ECO:0007669"/>
    <property type="project" value="TreeGrafter"/>
</dbReference>
<dbReference type="CDD" id="cd07017">
    <property type="entry name" value="S14_ClpP_2"/>
    <property type="match status" value="1"/>
</dbReference>
<dbReference type="FunFam" id="3.90.226.10:FF:000001">
    <property type="entry name" value="ATP-dependent Clp protease proteolytic subunit"/>
    <property type="match status" value="1"/>
</dbReference>
<dbReference type="Gene3D" id="3.90.226.10">
    <property type="entry name" value="2-enoyl-CoA Hydratase, Chain A, domain 1"/>
    <property type="match status" value="1"/>
</dbReference>
<dbReference type="HAMAP" id="MF_00444">
    <property type="entry name" value="ClpP"/>
    <property type="match status" value="1"/>
</dbReference>
<dbReference type="InterPro" id="IPR001907">
    <property type="entry name" value="ClpP"/>
</dbReference>
<dbReference type="InterPro" id="IPR029045">
    <property type="entry name" value="ClpP/crotonase-like_dom_sf"/>
</dbReference>
<dbReference type="InterPro" id="IPR023562">
    <property type="entry name" value="ClpP/TepA"/>
</dbReference>
<dbReference type="InterPro" id="IPR033135">
    <property type="entry name" value="ClpP_His_AS"/>
</dbReference>
<dbReference type="InterPro" id="IPR018215">
    <property type="entry name" value="ClpP_Ser_AS"/>
</dbReference>
<dbReference type="NCBIfam" id="TIGR00493">
    <property type="entry name" value="clpP"/>
    <property type="match status" value="1"/>
</dbReference>
<dbReference type="NCBIfam" id="NF001368">
    <property type="entry name" value="PRK00277.1"/>
    <property type="match status" value="1"/>
</dbReference>
<dbReference type="NCBIfam" id="NF009205">
    <property type="entry name" value="PRK12553.1"/>
    <property type="match status" value="1"/>
</dbReference>
<dbReference type="PANTHER" id="PTHR10381">
    <property type="entry name" value="ATP-DEPENDENT CLP PROTEASE PROTEOLYTIC SUBUNIT"/>
    <property type="match status" value="1"/>
</dbReference>
<dbReference type="PANTHER" id="PTHR10381:SF70">
    <property type="entry name" value="ATP-DEPENDENT CLP PROTEASE PROTEOLYTIC SUBUNIT"/>
    <property type="match status" value="1"/>
</dbReference>
<dbReference type="Pfam" id="PF00574">
    <property type="entry name" value="CLP_protease"/>
    <property type="match status" value="1"/>
</dbReference>
<dbReference type="PRINTS" id="PR00127">
    <property type="entry name" value="CLPPROTEASEP"/>
</dbReference>
<dbReference type="SUPFAM" id="SSF52096">
    <property type="entry name" value="ClpP/crotonase"/>
    <property type="match status" value="1"/>
</dbReference>
<dbReference type="PROSITE" id="PS00382">
    <property type="entry name" value="CLP_PROTEASE_HIS"/>
    <property type="match status" value="1"/>
</dbReference>
<dbReference type="PROSITE" id="PS00381">
    <property type="entry name" value="CLP_PROTEASE_SER"/>
    <property type="match status" value="1"/>
</dbReference>
<organism>
    <name type="scientific">Clostridium acetobutylicum (strain ATCC 824 / DSM 792 / JCM 1419 / IAM 19013 / LMG 5710 / NBRC 13948 / NRRL B-527 / VKM B-1787 / 2291 / W)</name>
    <dbReference type="NCBI Taxonomy" id="272562"/>
    <lineage>
        <taxon>Bacteria</taxon>
        <taxon>Bacillati</taxon>
        <taxon>Bacillota</taxon>
        <taxon>Clostridia</taxon>
        <taxon>Eubacteriales</taxon>
        <taxon>Clostridiaceae</taxon>
        <taxon>Clostridium</taxon>
    </lineage>
</organism>
<reference key="1">
    <citation type="journal article" date="2001" name="J. Bacteriol.">
        <title>Genome sequence and comparative analysis of the solvent-producing bacterium Clostridium acetobutylicum.</title>
        <authorList>
            <person name="Noelling J."/>
            <person name="Breton G."/>
            <person name="Omelchenko M.V."/>
            <person name="Makarova K.S."/>
            <person name="Zeng Q."/>
            <person name="Gibson R."/>
            <person name="Lee H.M."/>
            <person name="Dubois J."/>
            <person name="Qiu D."/>
            <person name="Hitti J."/>
            <person name="Wolf Y.I."/>
            <person name="Tatusov R.L."/>
            <person name="Sabathe F."/>
            <person name="Doucette-Stamm L.A."/>
            <person name="Soucaille P."/>
            <person name="Daly M.J."/>
            <person name="Bennett G.N."/>
            <person name="Koonin E.V."/>
            <person name="Smith D.R."/>
        </authorList>
    </citation>
    <scope>NUCLEOTIDE SEQUENCE [LARGE SCALE GENOMIC DNA]</scope>
    <source>
        <strain>ATCC 824 / DSM 792 / JCM 1419 / IAM 19013 / LMG 5710 / NBRC 13948 / NRRL B-527 / VKM B-1787 / 2291 / W</strain>
    </source>
</reference>
<comment type="function">
    <text evidence="1">Cleaves peptides in various proteins in a process that requires ATP hydrolysis. Has a chymotrypsin-like activity. Plays a major role in the degradation of misfolded proteins.</text>
</comment>
<comment type="catalytic activity">
    <reaction evidence="1">
        <text>Hydrolysis of proteins to small peptides in the presence of ATP and magnesium. alpha-casein is the usual test substrate. In the absence of ATP, only oligopeptides shorter than five residues are hydrolyzed (such as succinyl-Leu-Tyr-|-NHMec, and Leu-Tyr-Leu-|-Tyr-Trp, in which cleavage of the -Tyr-|-Leu- and -Tyr-|-Trp bonds also occurs).</text>
        <dbReference type="EC" id="3.4.21.92"/>
    </reaction>
</comment>
<comment type="subunit">
    <text evidence="1">Fourteen ClpP subunits assemble into 2 heptameric rings which stack back to back to give a disk-like structure with a central cavity, resembling the structure of eukaryotic proteasomes.</text>
</comment>
<comment type="subcellular location">
    <subcellularLocation>
        <location evidence="1">Cytoplasm</location>
    </subcellularLocation>
</comment>
<comment type="similarity">
    <text evidence="1">Belongs to the peptidase S14 family.</text>
</comment>